<organismHost>
    <name type="scientific">Acanthamoeba polyphaga</name>
    <name type="common">Amoeba</name>
    <dbReference type="NCBI Taxonomy" id="5757"/>
</organismHost>
<name>YR409_MIMIV</name>
<organism>
    <name type="scientific">Acanthamoeba polyphaga mimivirus</name>
    <name type="common">APMV</name>
    <dbReference type="NCBI Taxonomy" id="212035"/>
    <lineage>
        <taxon>Viruses</taxon>
        <taxon>Varidnaviria</taxon>
        <taxon>Bamfordvirae</taxon>
        <taxon>Nucleocytoviricota</taxon>
        <taxon>Megaviricetes</taxon>
        <taxon>Imitervirales</taxon>
        <taxon>Mimiviridae</taxon>
        <taxon>Megamimivirinae</taxon>
        <taxon>Mimivirus</taxon>
        <taxon>Mimivirus bradfordmassiliense</taxon>
    </lineage>
</organism>
<feature type="chain" id="PRO_0000071277" description="Uncharacterized protein R409">
    <location>
        <begin position="1"/>
        <end position="185"/>
    </location>
</feature>
<keyword id="KW-1185">Reference proteome</keyword>
<accession>Q5UQL1</accession>
<reference key="1">
    <citation type="journal article" date="2004" name="Science">
        <title>The 1.2-megabase genome sequence of Mimivirus.</title>
        <authorList>
            <person name="Raoult D."/>
            <person name="Audic S."/>
            <person name="Robert C."/>
            <person name="Abergel C."/>
            <person name="Renesto P."/>
            <person name="Ogata H."/>
            <person name="La Scola B."/>
            <person name="Susan M."/>
            <person name="Claverie J.-M."/>
        </authorList>
    </citation>
    <scope>NUCLEOTIDE SEQUENCE [LARGE SCALE GENOMIC DNA]</scope>
    <source>
        <strain>Rowbotham-Bradford</strain>
    </source>
</reference>
<gene>
    <name type="ordered locus">MIMI_R409</name>
</gene>
<dbReference type="EMBL" id="AY653733">
    <property type="protein sequence ID" value="AAV50678.1"/>
    <property type="molecule type" value="Genomic_DNA"/>
</dbReference>
<dbReference type="SMR" id="Q5UQL1"/>
<dbReference type="KEGG" id="vg:9925030"/>
<dbReference type="OrthoDB" id="21526at10239"/>
<dbReference type="Proteomes" id="UP000001134">
    <property type="component" value="Genome"/>
</dbReference>
<dbReference type="InterPro" id="IPR043916">
    <property type="entry name" value="P8_CR"/>
</dbReference>
<dbReference type="Pfam" id="PF19065">
    <property type="entry name" value="P8_CR"/>
    <property type="match status" value="1"/>
</dbReference>
<protein>
    <recommendedName>
        <fullName>Uncharacterized protein R409</fullName>
    </recommendedName>
</protein>
<sequence>MYKLNSSIMSLPEGAIKKNINSYELIKTPFVIFQADKNDFDKMSQKAVSNIGTESIISKVFYSPENIKLIQKQIIKRVFKLTKGSYLIDKQNKEDLLIVMKSVYMQNASGLNTKITSIKQIRNIIADLNNNVVNEVTPGIMTEVKSYVRYVNDVFNPVMPLDRPVNVSNSGTKSLPSVSTLYSNN</sequence>
<proteinExistence type="predicted"/>